<reference key="1">
    <citation type="journal article" date="2008" name="PLoS ONE">
        <title>Survival in nuclear waste, extreme resistance, and potential applications gleaned from the genome sequence of Kineococcus radiotolerans SRS30216.</title>
        <authorList>
            <person name="Bagwell C.E."/>
            <person name="Bhat S."/>
            <person name="Hawkins G.M."/>
            <person name="Smith B.W."/>
            <person name="Biswas T."/>
            <person name="Hoover T.R."/>
            <person name="Saunders E."/>
            <person name="Han C.S."/>
            <person name="Tsodikov O.V."/>
            <person name="Shimkets L.J."/>
        </authorList>
    </citation>
    <scope>NUCLEOTIDE SEQUENCE [LARGE SCALE GENOMIC DNA]</scope>
    <source>
        <strain>ATCC BAA-149 / DSM 14245 / SRS30216</strain>
    </source>
</reference>
<name>RL14_KINRD</name>
<gene>
    <name evidence="1" type="primary">rplN</name>
    <name type="ordered locus">Krad_0698</name>
</gene>
<accession>A6W5U8</accession>
<proteinExistence type="inferred from homology"/>
<organism>
    <name type="scientific">Kineococcus radiotolerans (strain ATCC BAA-149 / DSM 14245 / SRS30216)</name>
    <dbReference type="NCBI Taxonomy" id="266940"/>
    <lineage>
        <taxon>Bacteria</taxon>
        <taxon>Bacillati</taxon>
        <taxon>Actinomycetota</taxon>
        <taxon>Actinomycetes</taxon>
        <taxon>Kineosporiales</taxon>
        <taxon>Kineosporiaceae</taxon>
        <taxon>Kineococcus</taxon>
    </lineage>
</organism>
<keyword id="KW-1185">Reference proteome</keyword>
<keyword id="KW-0687">Ribonucleoprotein</keyword>
<keyword id="KW-0689">Ribosomal protein</keyword>
<keyword id="KW-0694">RNA-binding</keyword>
<keyword id="KW-0699">rRNA-binding</keyword>
<sequence>MIQQESRLKVADNTGAKEILCIRVLGGSGRRYAGIGDVIVATVKDAIPGGNVKKGDVVKAVIVRTKKERRRADGSYIRFDENAAVILRADGDPRGTRIFGPVGRELREKKFMRIISLAPEVL</sequence>
<evidence type="ECO:0000255" key="1">
    <source>
        <dbReference type="HAMAP-Rule" id="MF_01367"/>
    </source>
</evidence>
<evidence type="ECO:0000305" key="2"/>
<feature type="chain" id="PRO_1000087133" description="Large ribosomal subunit protein uL14">
    <location>
        <begin position="1"/>
        <end position="122"/>
    </location>
</feature>
<comment type="function">
    <text evidence="1">Binds to 23S rRNA. Forms part of two intersubunit bridges in the 70S ribosome.</text>
</comment>
<comment type="subunit">
    <text evidence="1">Part of the 50S ribosomal subunit. Forms a cluster with proteins L3 and L19. In the 70S ribosome, L14 and L19 interact and together make contacts with the 16S rRNA in bridges B5 and B8.</text>
</comment>
<comment type="similarity">
    <text evidence="1">Belongs to the universal ribosomal protein uL14 family.</text>
</comment>
<dbReference type="EMBL" id="CP000750">
    <property type="protein sequence ID" value="ABS02187.1"/>
    <property type="molecule type" value="Genomic_DNA"/>
</dbReference>
<dbReference type="RefSeq" id="WP_012084971.1">
    <property type="nucleotide sequence ID" value="NC_009664.2"/>
</dbReference>
<dbReference type="SMR" id="A6W5U8"/>
<dbReference type="STRING" id="266940.Krad_0698"/>
<dbReference type="KEGG" id="kra:Krad_0698"/>
<dbReference type="eggNOG" id="COG0093">
    <property type="taxonomic scope" value="Bacteria"/>
</dbReference>
<dbReference type="HOGENOM" id="CLU_095071_2_1_11"/>
<dbReference type="OrthoDB" id="9806379at2"/>
<dbReference type="Proteomes" id="UP000001116">
    <property type="component" value="Chromosome"/>
</dbReference>
<dbReference type="GO" id="GO:0022625">
    <property type="term" value="C:cytosolic large ribosomal subunit"/>
    <property type="evidence" value="ECO:0007669"/>
    <property type="project" value="TreeGrafter"/>
</dbReference>
<dbReference type="GO" id="GO:0070180">
    <property type="term" value="F:large ribosomal subunit rRNA binding"/>
    <property type="evidence" value="ECO:0007669"/>
    <property type="project" value="TreeGrafter"/>
</dbReference>
<dbReference type="GO" id="GO:0003735">
    <property type="term" value="F:structural constituent of ribosome"/>
    <property type="evidence" value="ECO:0007669"/>
    <property type="project" value="InterPro"/>
</dbReference>
<dbReference type="GO" id="GO:0006412">
    <property type="term" value="P:translation"/>
    <property type="evidence" value="ECO:0007669"/>
    <property type="project" value="UniProtKB-UniRule"/>
</dbReference>
<dbReference type="CDD" id="cd00337">
    <property type="entry name" value="Ribosomal_uL14"/>
    <property type="match status" value="1"/>
</dbReference>
<dbReference type="FunFam" id="2.40.150.20:FF:000001">
    <property type="entry name" value="50S ribosomal protein L14"/>
    <property type="match status" value="1"/>
</dbReference>
<dbReference type="Gene3D" id="2.40.150.20">
    <property type="entry name" value="Ribosomal protein L14"/>
    <property type="match status" value="1"/>
</dbReference>
<dbReference type="HAMAP" id="MF_01367">
    <property type="entry name" value="Ribosomal_uL14"/>
    <property type="match status" value="1"/>
</dbReference>
<dbReference type="InterPro" id="IPR000218">
    <property type="entry name" value="Ribosomal_uL14"/>
</dbReference>
<dbReference type="InterPro" id="IPR005745">
    <property type="entry name" value="Ribosomal_uL14_bac-type"/>
</dbReference>
<dbReference type="InterPro" id="IPR019972">
    <property type="entry name" value="Ribosomal_uL14_CS"/>
</dbReference>
<dbReference type="InterPro" id="IPR036853">
    <property type="entry name" value="Ribosomal_uL14_sf"/>
</dbReference>
<dbReference type="NCBIfam" id="TIGR01067">
    <property type="entry name" value="rplN_bact"/>
    <property type="match status" value="1"/>
</dbReference>
<dbReference type="PANTHER" id="PTHR11761">
    <property type="entry name" value="50S/60S RIBOSOMAL PROTEIN L14/L23"/>
    <property type="match status" value="1"/>
</dbReference>
<dbReference type="PANTHER" id="PTHR11761:SF3">
    <property type="entry name" value="LARGE RIBOSOMAL SUBUNIT PROTEIN UL14M"/>
    <property type="match status" value="1"/>
</dbReference>
<dbReference type="Pfam" id="PF00238">
    <property type="entry name" value="Ribosomal_L14"/>
    <property type="match status" value="1"/>
</dbReference>
<dbReference type="SMART" id="SM01374">
    <property type="entry name" value="Ribosomal_L14"/>
    <property type="match status" value="1"/>
</dbReference>
<dbReference type="SUPFAM" id="SSF50193">
    <property type="entry name" value="Ribosomal protein L14"/>
    <property type="match status" value="1"/>
</dbReference>
<dbReference type="PROSITE" id="PS00049">
    <property type="entry name" value="RIBOSOMAL_L14"/>
    <property type="match status" value="1"/>
</dbReference>
<protein>
    <recommendedName>
        <fullName evidence="1">Large ribosomal subunit protein uL14</fullName>
    </recommendedName>
    <alternativeName>
        <fullName evidence="2">50S ribosomal protein L14</fullName>
    </alternativeName>
</protein>